<proteinExistence type="predicted"/>
<accession>Q10095</accession>
<protein>
    <recommendedName>
        <fullName>Uncharacterized protein C11D3.16c</fullName>
    </recommendedName>
</protein>
<keyword id="KW-1185">Reference proteome</keyword>
<feature type="chain" id="PRO_0000116455" description="Uncharacterized protein C11D3.16c">
    <location>
        <begin position="1"/>
        <end position="131"/>
    </location>
</feature>
<reference key="1">
    <citation type="journal article" date="2002" name="Nature">
        <title>The genome sequence of Schizosaccharomyces pombe.</title>
        <authorList>
            <person name="Wood V."/>
            <person name="Gwilliam R."/>
            <person name="Rajandream M.A."/>
            <person name="Lyne M.H."/>
            <person name="Lyne R."/>
            <person name="Stewart A."/>
            <person name="Sgouros J.G."/>
            <person name="Peat N."/>
            <person name="Hayles J."/>
            <person name="Baker S.G."/>
            <person name="Basham D."/>
            <person name="Bowman S."/>
            <person name="Brooks K."/>
            <person name="Brown D."/>
            <person name="Brown S."/>
            <person name="Chillingworth T."/>
            <person name="Churcher C.M."/>
            <person name="Collins M."/>
            <person name="Connor R."/>
            <person name="Cronin A."/>
            <person name="Davis P."/>
            <person name="Feltwell T."/>
            <person name="Fraser A."/>
            <person name="Gentles S."/>
            <person name="Goble A."/>
            <person name="Hamlin N."/>
            <person name="Harris D.E."/>
            <person name="Hidalgo J."/>
            <person name="Hodgson G."/>
            <person name="Holroyd S."/>
            <person name="Hornsby T."/>
            <person name="Howarth S."/>
            <person name="Huckle E.J."/>
            <person name="Hunt S."/>
            <person name="Jagels K."/>
            <person name="James K.D."/>
            <person name="Jones L."/>
            <person name="Jones M."/>
            <person name="Leather S."/>
            <person name="McDonald S."/>
            <person name="McLean J."/>
            <person name="Mooney P."/>
            <person name="Moule S."/>
            <person name="Mungall K.L."/>
            <person name="Murphy L.D."/>
            <person name="Niblett D."/>
            <person name="Odell C."/>
            <person name="Oliver K."/>
            <person name="O'Neil S."/>
            <person name="Pearson D."/>
            <person name="Quail M.A."/>
            <person name="Rabbinowitsch E."/>
            <person name="Rutherford K.M."/>
            <person name="Rutter S."/>
            <person name="Saunders D."/>
            <person name="Seeger K."/>
            <person name="Sharp S."/>
            <person name="Skelton J."/>
            <person name="Simmonds M.N."/>
            <person name="Squares R."/>
            <person name="Squares S."/>
            <person name="Stevens K."/>
            <person name="Taylor K."/>
            <person name="Taylor R.G."/>
            <person name="Tivey A."/>
            <person name="Walsh S.V."/>
            <person name="Warren T."/>
            <person name="Whitehead S."/>
            <person name="Woodward J.R."/>
            <person name="Volckaert G."/>
            <person name="Aert R."/>
            <person name="Robben J."/>
            <person name="Grymonprez B."/>
            <person name="Weltjens I."/>
            <person name="Vanstreels E."/>
            <person name="Rieger M."/>
            <person name="Schaefer M."/>
            <person name="Mueller-Auer S."/>
            <person name="Gabel C."/>
            <person name="Fuchs M."/>
            <person name="Duesterhoeft A."/>
            <person name="Fritzc C."/>
            <person name="Holzer E."/>
            <person name="Moestl D."/>
            <person name="Hilbert H."/>
            <person name="Borzym K."/>
            <person name="Langer I."/>
            <person name="Beck A."/>
            <person name="Lehrach H."/>
            <person name="Reinhardt R."/>
            <person name="Pohl T.M."/>
            <person name="Eger P."/>
            <person name="Zimmermann W."/>
            <person name="Wedler H."/>
            <person name="Wambutt R."/>
            <person name="Purnelle B."/>
            <person name="Goffeau A."/>
            <person name="Cadieu E."/>
            <person name="Dreano S."/>
            <person name="Gloux S."/>
            <person name="Lelaure V."/>
            <person name="Mottier S."/>
            <person name="Galibert F."/>
            <person name="Aves S.J."/>
            <person name="Xiang Z."/>
            <person name="Hunt C."/>
            <person name="Moore K."/>
            <person name="Hurst S.M."/>
            <person name="Lucas M."/>
            <person name="Rochet M."/>
            <person name="Gaillardin C."/>
            <person name="Tallada V.A."/>
            <person name="Garzon A."/>
            <person name="Thode G."/>
            <person name="Daga R.R."/>
            <person name="Cruzado L."/>
            <person name="Jimenez J."/>
            <person name="Sanchez M."/>
            <person name="del Rey F."/>
            <person name="Benito J."/>
            <person name="Dominguez A."/>
            <person name="Revuelta J.L."/>
            <person name="Moreno S."/>
            <person name="Armstrong J."/>
            <person name="Forsburg S.L."/>
            <person name="Cerutti L."/>
            <person name="Lowe T."/>
            <person name="McCombie W.R."/>
            <person name="Paulsen I."/>
            <person name="Potashkin J."/>
            <person name="Shpakovski G.V."/>
            <person name="Ussery D."/>
            <person name="Barrell B.G."/>
            <person name="Nurse P."/>
        </authorList>
    </citation>
    <scope>NUCLEOTIDE SEQUENCE [LARGE SCALE GENOMIC DNA]</scope>
    <source>
        <strain>972 / ATCC 24843</strain>
    </source>
</reference>
<name>YAOG_SCHPO</name>
<sequence length="131" mass="14846">MTTLKVDEDLECALMEQFIEALHQRCTDIPRTQLCVLAISFNRFILHKSPDIFTYIQYYQQKLNSYGFPLPPVVLKSLQMPLTSPEPDADERFRDGDTEFDTAGVTASSCFPVDVKSPSVRAFGNVTFQSD</sequence>
<organism>
    <name type="scientific">Schizosaccharomyces pombe (strain 972 / ATCC 24843)</name>
    <name type="common">Fission yeast</name>
    <dbReference type="NCBI Taxonomy" id="284812"/>
    <lineage>
        <taxon>Eukaryota</taxon>
        <taxon>Fungi</taxon>
        <taxon>Dikarya</taxon>
        <taxon>Ascomycota</taxon>
        <taxon>Taphrinomycotina</taxon>
        <taxon>Schizosaccharomycetes</taxon>
        <taxon>Schizosaccharomycetales</taxon>
        <taxon>Schizosaccharomycetaceae</taxon>
        <taxon>Schizosaccharomyces</taxon>
    </lineage>
</organism>
<gene>
    <name type="ORF">SPAC11D3.16c</name>
</gene>
<dbReference type="EMBL" id="CU329670">
    <property type="protein sequence ID" value="CAA92317.1"/>
    <property type="molecule type" value="Genomic_DNA"/>
</dbReference>
<dbReference type="PIR" id="T37525">
    <property type="entry name" value="T37525"/>
</dbReference>
<dbReference type="RefSeq" id="NP_592811.1">
    <property type="nucleotide sequence ID" value="NM_001018211.2"/>
</dbReference>
<dbReference type="BioGRID" id="279428">
    <property type="interactions" value="8"/>
</dbReference>
<dbReference type="iPTMnet" id="Q10095"/>
<dbReference type="PaxDb" id="4896-SPAC11D3.16c.1"/>
<dbReference type="EnsemblFungi" id="SPAC11D3.16c.1">
    <property type="protein sequence ID" value="SPAC11D3.16c.1:pep"/>
    <property type="gene ID" value="SPAC11D3.16c"/>
</dbReference>
<dbReference type="KEGG" id="spo:2542990"/>
<dbReference type="PomBase" id="SPAC11D3.16c"/>
<dbReference type="VEuPathDB" id="FungiDB:SPAC11D3.16c"/>
<dbReference type="HOGENOM" id="CLU_1928803_0_0_1"/>
<dbReference type="InParanoid" id="Q10095"/>
<dbReference type="PRO" id="PR:Q10095"/>
<dbReference type="Proteomes" id="UP000002485">
    <property type="component" value="Chromosome I"/>
</dbReference>
<dbReference type="GO" id="GO:0005829">
    <property type="term" value="C:cytosol"/>
    <property type="evidence" value="ECO:0007005"/>
    <property type="project" value="PomBase"/>
</dbReference>
<dbReference type="GO" id="GO:0044732">
    <property type="term" value="C:mitotic spindle pole body"/>
    <property type="evidence" value="ECO:0007005"/>
    <property type="project" value="PomBase"/>
</dbReference>
<dbReference type="GO" id="GO:0005634">
    <property type="term" value="C:nucleus"/>
    <property type="evidence" value="ECO:0007005"/>
    <property type="project" value="PomBase"/>
</dbReference>